<name>HYTL_TITSE</name>
<sequence>MKMMIAIVFVSILLLMFSLSSTAMGMETEQQNMEERADVDFTGIADSIIKKIKETNAKPPARFDPATFGENED</sequence>
<dbReference type="GO" id="GO:0005576">
    <property type="term" value="C:extracellular region"/>
    <property type="evidence" value="ECO:0007669"/>
    <property type="project" value="UniProtKB-SubCell"/>
</dbReference>
<dbReference type="GO" id="GO:0008217">
    <property type="term" value="P:regulation of blood pressure"/>
    <property type="evidence" value="ECO:0007669"/>
    <property type="project" value="UniProtKB-KW"/>
</dbReference>
<comment type="function">
    <text evidence="1">May potentiate the hypotensive effect of bradykinin.</text>
</comment>
<comment type="subcellular location">
    <subcellularLocation>
        <location evidence="3">Secreted</location>
    </subcellularLocation>
</comment>
<comment type="tissue specificity">
    <text evidence="3 5">Expressed by the venom gland.</text>
</comment>
<proteinExistence type="evidence at protein level"/>
<evidence type="ECO:0000250" key="1"/>
<evidence type="ECO:0000255" key="2"/>
<evidence type="ECO:0000269" key="3">
    <source>
    </source>
</evidence>
<evidence type="ECO:0000303" key="4">
    <source>
    </source>
</evidence>
<evidence type="ECO:0000305" key="5">
    <source>
    </source>
</evidence>
<organism>
    <name type="scientific">Tityus serrulatus</name>
    <name type="common">Brazilian scorpion</name>
    <dbReference type="NCBI Taxonomy" id="6887"/>
    <lineage>
        <taxon>Eukaryota</taxon>
        <taxon>Metazoa</taxon>
        <taxon>Ecdysozoa</taxon>
        <taxon>Arthropoda</taxon>
        <taxon>Chelicerata</taxon>
        <taxon>Arachnida</taxon>
        <taxon>Scorpiones</taxon>
        <taxon>Buthida</taxon>
        <taxon>Buthoidea</taxon>
        <taxon>Buthidae</taxon>
        <taxon>Tityus</taxon>
    </lineage>
</organism>
<feature type="signal peptide" evidence="2">
    <location>
        <begin position="1"/>
        <end position="25"/>
    </location>
</feature>
<feature type="peptide" id="PRO_0000401166" description="Hypotensin-like peptide" evidence="3">
    <location>
        <begin position="26"/>
        <end position="73"/>
    </location>
</feature>
<protein>
    <recommendedName>
        <fullName evidence="4">Hypotensin-like peptide</fullName>
    </recommendedName>
</protein>
<keyword id="KW-0903">Direct protein sequencing</keyword>
<keyword id="KW-0382">Hypotensive agent</keyword>
<keyword id="KW-0964">Secreted</keyword>
<keyword id="KW-0732">Signal</keyword>
<accession>P86824</accession>
<reference key="1">
    <citation type="journal article" date="2012" name="O. J. Gen.">
        <title>Transcriptome analysis of the Tityus serrulatus scorpion venom gland.</title>
        <authorList>
            <person name="Alvarenga E.R."/>
            <person name="Mendes T.M."/>
            <person name="Magalhaes B.F."/>
            <person name="Siqueira F.F."/>
            <person name="Dantas A.E."/>
            <person name="Barroca T.M."/>
            <person name="Horta C.C."/>
            <person name="Kalapothakis E."/>
        </authorList>
    </citation>
    <scope>NUCLEOTIDE SEQUENCE [MRNA]</scope>
    <source>
        <tissue>Venom gland</tissue>
    </source>
</reference>
<reference key="2">
    <citation type="journal article" date="2008" name="Toxicon">
        <title>Tityus serrulatus venom peptidomics: assessing venom peptide diversity.</title>
        <authorList>
            <person name="Rates B."/>
            <person name="Ferraz K.K."/>
            <person name="Borges M.H."/>
            <person name="Richardson M."/>
            <person name="De Lima M.E."/>
            <person name="Pimenta A.M."/>
        </authorList>
    </citation>
    <scope>PROTEIN SEQUENCE OF 37-50</scope>
    <scope>SUBCELLULAR LOCATION</scope>
    <source>
        <tissue>Venom</tissue>
    </source>
</reference>